<organism>
    <name type="scientific">Bacteroides fragilis (strain ATCC 25285 / DSM 2151 / CCUG 4856 / JCM 11019 / LMG 10263 / NCTC 9343 / Onslow / VPI 2553 / EN-2)</name>
    <dbReference type="NCBI Taxonomy" id="272559"/>
    <lineage>
        <taxon>Bacteria</taxon>
        <taxon>Pseudomonadati</taxon>
        <taxon>Bacteroidota</taxon>
        <taxon>Bacteroidia</taxon>
        <taxon>Bacteroidales</taxon>
        <taxon>Bacteroidaceae</taxon>
        <taxon>Bacteroides</taxon>
    </lineage>
</organism>
<evidence type="ECO:0000255" key="1">
    <source>
        <dbReference type="HAMAP-Rule" id="MF_00131"/>
    </source>
</evidence>
<feature type="chain" id="PRO_0000098736" description="Tryptophan synthase alpha chain">
    <location>
        <begin position="1"/>
        <end position="263"/>
    </location>
</feature>
<feature type="active site" description="Proton acceptor" evidence="1">
    <location>
        <position position="46"/>
    </location>
</feature>
<feature type="active site" description="Proton acceptor" evidence="1">
    <location>
        <position position="57"/>
    </location>
</feature>
<proteinExistence type="inferred from homology"/>
<accession>Q5LBZ2</accession>
<gene>
    <name evidence="1" type="primary">trpA</name>
    <name type="ordered locus">BF2678</name>
</gene>
<sequence length="263" mass="29864">MNRINQLFDSNPRDLLSIYFCAGYPTLEGTTEVIRTLEKHGVNMIEIGIPFSDPMADGMVIQNAATQALRNGMSLRLLFEQLHDIRRDVKIPLILMGYLNPIMQFGFDNFCRQCAECGIDGVIIPDLPFKDYQEHFRTIAERYDVKVIMLITPETSEERVREIDEHTDGFIYMVSSAATTGAQQDFDGQKRAYFKKIEKMNLRNPRMVGFGISNEATFRAACENASGAIIGSRFVTLLHEEKNPEKAITRLKAILNLSSNDLR</sequence>
<dbReference type="EC" id="4.2.1.20" evidence="1"/>
<dbReference type="EMBL" id="CR626927">
    <property type="protein sequence ID" value="CAH08376.1"/>
    <property type="molecule type" value="Genomic_DNA"/>
</dbReference>
<dbReference type="RefSeq" id="WP_005788291.1">
    <property type="nucleotide sequence ID" value="NZ_UFTH01000002.1"/>
</dbReference>
<dbReference type="SMR" id="Q5LBZ2"/>
<dbReference type="PaxDb" id="272559-BF9343_2595"/>
<dbReference type="GeneID" id="60366805"/>
<dbReference type="KEGG" id="bfs:BF9343_2595"/>
<dbReference type="eggNOG" id="COG0159">
    <property type="taxonomic scope" value="Bacteria"/>
</dbReference>
<dbReference type="HOGENOM" id="CLU_016734_0_0_10"/>
<dbReference type="UniPathway" id="UPA00035">
    <property type="reaction ID" value="UER00044"/>
</dbReference>
<dbReference type="Proteomes" id="UP000006731">
    <property type="component" value="Chromosome"/>
</dbReference>
<dbReference type="GO" id="GO:0005829">
    <property type="term" value="C:cytosol"/>
    <property type="evidence" value="ECO:0007669"/>
    <property type="project" value="TreeGrafter"/>
</dbReference>
<dbReference type="GO" id="GO:0004834">
    <property type="term" value="F:tryptophan synthase activity"/>
    <property type="evidence" value="ECO:0007669"/>
    <property type="project" value="UniProtKB-UniRule"/>
</dbReference>
<dbReference type="CDD" id="cd04724">
    <property type="entry name" value="Tryptophan_synthase_alpha"/>
    <property type="match status" value="1"/>
</dbReference>
<dbReference type="FunFam" id="3.20.20.70:FF:000037">
    <property type="entry name" value="Tryptophan synthase alpha chain"/>
    <property type="match status" value="1"/>
</dbReference>
<dbReference type="Gene3D" id="3.20.20.70">
    <property type="entry name" value="Aldolase class I"/>
    <property type="match status" value="1"/>
</dbReference>
<dbReference type="HAMAP" id="MF_00131">
    <property type="entry name" value="Trp_synth_alpha"/>
    <property type="match status" value="1"/>
</dbReference>
<dbReference type="InterPro" id="IPR013785">
    <property type="entry name" value="Aldolase_TIM"/>
</dbReference>
<dbReference type="InterPro" id="IPR011060">
    <property type="entry name" value="RibuloseP-bd_barrel"/>
</dbReference>
<dbReference type="InterPro" id="IPR018204">
    <property type="entry name" value="Trp_synthase_alpha_AS"/>
</dbReference>
<dbReference type="InterPro" id="IPR002028">
    <property type="entry name" value="Trp_synthase_suA"/>
</dbReference>
<dbReference type="NCBIfam" id="TIGR00262">
    <property type="entry name" value="trpA"/>
    <property type="match status" value="1"/>
</dbReference>
<dbReference type="PANTHER" id="PTHR43406:SF1">
    <property type="entry name" value="TRYPTOPHAN SYNTHASE ALPHA CHAIN, CHLOROPLASTIC"/>
    <property type="match status" value="1"/>
</dbReference>
<dbReference type="PANTHER" id="PTHR43406">
    <property type="entry name" value="TRYPTOPHAN SYNTHASE, ALPHA CHAIN"/>
    <property type="match status" value="1"/>
</dbReference>
<dbReference type="Pfam" id="PF00290">
    <property type="entry name" value="Trp_syntA"/>
    <property type="match status" value="1"/>
</dbReference>
<dbReference type="SUPFAM" id="SSF51366">
    <property type="entry name" value="Ribulose-phoshate binding barrel"/>
    <property type="match status" value="1"/>
</dbReference>
<dbReference type="PROSITE" id="PS00167">
    <property type="entry name" value="TRP_SYNTHASE_ALPHA"/>
    <property type="match status" value="1"/>
</dbReference>
<reference key="1">
    <citation type="journal article" date="2005" name="Science">
        <title>Extensive DNA inversions in the B. fragilis genome control variable gene expression.</title>
        <authorList>
            <person name="Cerdeno-Tarraga A.-M."/>
            <person name="Patrick S."/>
            <person name="Crossman L.C."/>
            <person name="Blakely G."/>
            <person name="Abratt V."/>
            <person name="Lennard N."/>
            <person name="Poxton I."/>
            <person name="Duerden B."/>
            <person name="Harris B."/>
            <person name="Quail M.A."/>
            <person name="Barron A."/>
            <person name="Clark L."/>
            <person name="Corton C."/>
            <person name="Doggett J."/>
            <person name="Holden M.T.G."/>
            <person name="Larke N."/>
            <person name="Line A."/>
            <person name="Lord A."/>
            <person name="Norbertczak H."/>
            <person name="Ormond D."/>
            <person name="Price C."/>
            <person name="Rabbinowitsch E."/>
            <person name="Woodward J."/>
            <person name="Barrell B.G."/>
            <person name="Parkhill J."/>
        </authorList>
    </citation>
    <scope>NUCLEOTIDE SEQUENCE [LARGE SCALE GENOMIC DNA]</scope>
    <source>
        <strain>ATCC 25285 / DSM 2151 / CCUG 4856 / JCM 11019 / LMG 10263 / NCTC 9343 / Onslow / VPI 2553 / EN-2</strain>
    </source>
</reference>
<name>TRPA_BACFN</name>
<protein>
    <recommendedName>
        <fullName evidence="1">Tryptophan synthase alpha chain</fullName>
        <ecNumber evidence="1">4.2.1.20</ecNumber>
    </recommendedName>
</protein>
<keyword id="KW-0028">Amino-acid biosynthesis</keyword>
<keyword id="KW-0057">Aromatic amino acid biosynthesis</keyword>
<keyword id="KW-0456">Lyase</keyword>
<keyword id="KW-0822">Tryptophan biosynthesis</keyword>
<comment type="function">
    <text evidence="1">The alpha subunit is responsible for the aldol cleavage of indoleglycerol phosphate to indole and glyceraldehyde 3-phosphate.</text>
</comment>
<comment type="catalytic activity">
    <reaction evidence="1">
        <text>(1S,2R)-1-C-(indol-3-yl)glycerol 3-phosphate + L-serine = D-glyceraldehyde 3-phosphate + L-tryptophan + H2O</text>
        <dbReference type="Rhea" id="RHEA:10532"/>
        <dbReference type="ChEBI" id="CHEBI:15377"/>
        <dbReference type="ChEBI" id="CHEBI:33384"/>
        <dbReference type="ChEBI" id="CHEBI:57912"/>
        <dbReference type="ChEBI" id="CHEBI:58866"/>
        <dbReference type="ChEBI" id="CHEBI:59776"/>
        <dbReference type="EC" id="4.2.1.20"/>
    </reaction>
</comment>
<comment type="pathway">
    <text evidence="1">Amino-acid biosynthesis; L-tryptophan biosynthesis; L-tryptophan from chorismate: step 5/5.</text>
</comment>
<comment type="subunit">
    <text evidence="1">Tetramer of two alpha and two beta chains.</text>
</comment>
<comment type="similarity">
    <text evidence="1">Belongs to the TrpA family.</text>
</comment>